<accession>C3MHW1</accession>
<comment type="similarity">
    <text evidence="1">Belongs to the bacterial ribosomal protein bL28 family.</text>
</comment>
<name>RL28_SINFN</name>
<proteinExistence type="inferred from homology"/>
<protein>
    <recommendedName>
        <fullName evidence="1">Large ribosomal subunit protein bL28</fullName>
    </recommendedName>
    <alternativeName>
        <fullName evidence="3">50S ribosomal protein L28</fullName>
    </alternativeName>
</protein>
<reference key="1">
    <citation type="journal article" date="2009" name="Appl. Environ. Microbiol.">
        <title>Rhizobium sp. strain NGR234 possesses a remarkable number of secretion systems.</title>
        <authorList>
            <person name="Schmeisser C."/>
            <person name="Liesegang H."/>
            <person name="Krysciak D."/>
            <person name="Bakkou N."/>
            <person name="Le Quere A."/>
            <person name="Wollherr A."/>
            <person name="Heinemeyer I."/>
            <person name="Morgenstern B."/>
            <person name="Pommerening-Roeser A."/>
            <person name="Flores M."/>
            <person name="Palacios R."/>
            <person name="Brenner S."/>
            <person name="Gottschalk G."/>
            <person name="Schmitz R.A."/>
            <person name="Broughton W.J."/>
            <person name="Perret X."/>
            <person name="Strittmatter A.W."/>
            <person name="Streit W.R."/>
        </authorList>
    </citation>
    <scope>NUCLEOTIDE SEQUENCE [LARGE SCALE GENOMIC DNA]</scope>
    <source>
        <strain>NBRC 101917 / NGR234</strain>
    </source>
</reference>
<organism>
    <name type="scientific">Sinorhizobium fredii (strain NBRC 101917 / NGR234)</name>
    <dbReference type="NCBI Taxonomy" id="394"/>
    <lineage>
        <taxon>Bacteria</taxon>
        <taxon>Pseudomonadati</taxon>
        <taxon>Pseudomonadota</taxon>
        <taxon>Alphaproteobacteria</taxon>
        <taxon>Hyphomicrobiales</taxon>
        <taxon>Rhizobiaceae</taxon>
        <taxon>Sinorhizobium/Ensifer group</taxon>
        <taxon>Sinorhizobium</taxon>
    </lineage>
</organism>
<keyword id="KW-1185">Reference proteome</keyword>
<keyword id="KW-0687">Ribonucleoprotein</keyword>
<keyword id="KW-0689">Ribosomal protein</keyword>
<feature type="chain" id="PRO_1000195936" description="Large ribosomal subunit protein bL28">
    <location>
        <begin position="1"/>
        <end position="96"/>
    </location>
</feature>
<feature type="region of interest" description="Disordered" evidence="2">
    <location>
        <begin position="1"/>
        <end position="24"/>
    </location>
</feature>
<gene>
    <name evidence="1" type="primary">rpmB</name>
    <name type="ordered locus">NGR_c27140</name>
</gene>
<dbReference type="EMBL" id="CP001389">
    <property type="protein sequence ID" value="ACP26463.1"/>
    <property type="molecule type" value="Genomic_DNA"/>
</dbReference>
<dbReference type="RefSeq" id="WP_012709220.1">
    <property type="nucleotide sequence ID" value="NC_012587.1"/>
</dbReference>
<dbReference type="RefSeq" id="YP_002827216.1">
    <property type="nucleotide sequence ID" value="NC_012587.1"/>
</dbReference>
<dbReference type="SMR" id="C3MHW1"/>
<dbReference type="STRING" id="394.NGR_c27140"/>
<dbReference type="KEGG" id="rhi:NGR_c27140"/>
<dbReference type="PATRIC" id="fig|394.7.peg.5540"/>
<dbReference type="eggNOG" id="COG0227">
    <property type="taxonomic scope" value="Bacteria"/>
</dbReference>
<dbReference type="HOGENOM" id="CLU_064548_4_2_5"/>
<dbReference type="OrthoDB" id="9805609at2"/>
<dbReference type="Proteomes" id="UP000001054">
    <property type="component" value="Chromosome"/>
</dbReference>
<dbReference type="GO" id="GO:0022625">
    <property type="term" value="C:cytosolic large ribosomal subunit"/>
    <property type="evidence" value="ECO:0007669"/>
    <property type="project" value="TreeGrafter"/>
</dbReference>
<dbReference type="GO" id="GO:0003735">
    <property type="term" value="F:structural constituent of ribosome"/>
    <property type="evidence" value="ECO:0007669"/>
    <property type="project" value="InterPro"/>
</dbReference>
<dbReference type="GO" id="GO:0006412">
    <property type="term" value="P:translation"/>
    <property type="evidence" value="ECO:0007669"/>
    <property type="project" value="UniProtKB-UniRule"/>
</dbReference>
<dbReference type="Gene3D" id="2.30.170.40">
    <property type="entry name" value="Ribosomal protein L28/L24"/>
    <property type="match status" value="1"/>
</dbReference>
<dbReference type="HAMAP" id="MF_00373">
    <property type="entry name" value="Ribosomal_bL28"/>
    <property type="match status" value="1"/>
</dbReference>
<dbReference type="InterPro" id="IPR026569">
    <property type="entry name" value="Ribosomal_bL28"/>
</dbReference>
<dbReference type="InterPro" id="IPR034704">
    <property type="entry name" value="Ribosomal_bL28/bL31-like_sf"/>
</dbReference>
<dbReference type="InterPro" id="IPR001383">
    <property type="entry name" value="Ribosomal_bL28_bact-type"/>
</dbReference>
<dbReference type="InterPro" id="IPR037147">
    <property type="entry name" value="Ribosomal_bL28_sf"/>
</dbReference>
<dbReference type="NCBIfam" id="TIGR00009">
    <property type="entry name" value="L28"/>
    <property type="match status" value="1"/>
</dbReference>
<dbReference type="PANTHER" id="PTHR13528">
    <property type="entry name" value="39S RIBOSOMAL PROTEIN L28, MITOCHONDRIAL"/>
    <property type="match status" value="1"/>
</dbReference>
<dbReference type="PANTHER" id="PTHR13528:SF2">
    <property type="entry name" value="LARGE RIBOSOMAL SUBUNIT PROTEIN BL28M"/>
    <property type="match status" value="1"/>
</dbReference>
<dbReference type="Pfam" id="PF00830">
    <property type="entry name" value="Ribosomal_L28"/>
    <property type="match status" value="1"/>
</dbReference>
<dbReference type="SUPFAM" id="SSF143800">
    <property type="entry name" value="L28p-like"/>
    <property type="match status" value="1"/>
</dbReference>
<sequence length="96" mass="10599">MSRSCELTGKGVQSGHNVSHANNKTKRKFLPNLCNVTLISDALGQRFRLRVSAAALRSVEHRGGLDAFLLKADENELSMRARLLRRQIVKKAAEAA</sequence>
<evidence type="ECO:0000255" key="1">
    <source>
        <dbReference type="HAMAP-Rule" id="MF_00373"/>
    </source>
</evidence>
<evidence type="ECO:0000256" key="2">
    <source>
        <dbReference type="SAM" id="MobiDB-lite"/>
    </source>
</evidence>
<evidence type="ECO:0000305" key="3"/>